<dbReference type="EMBL" id="AM849034">
    <property type="protein sequence ID" value="CAQ00891.1"/>
    <property type="molecule type" value="Genomic_DNA"/>
</dbReference>
<dbReference type="RefSeq" id="WP_012298199.1">
    <property type="nucleotide sequence ID" value="NZ_MZMN01000003.1"/>
</dbReference>
<dbReference type="SMR" id="B0REP4"/>
<dbReference type="STRING" id="31964.CMS0771"/>
<dbReference type="KEGG" id="cms:CMS0771"/>
<dbReference type="eggNOG" id="COG0052">
    <property type="taxonomic scope" value="Bacteria"/>
</dbReference>
<dbReference type="HOGENOM" id="CLU_040318_2_3_11"/>
<dbReference type="OrthoDB" id="9808036at2"/>
<dbReference type="Proteomes" id="UP000001318">
    <property type="component" value="Chromosome"/>
</dbReference>
<dbReference type="GO" id="GO:0022627">
    <property type="term" value="C:cytosolic small ribosomal subunit"/>
    <property type="evidence" value="ECO:0007669"/>
    <property type="project" value="TreeGrafter"/>
</dbReference>
<dbReference type="GO" id="GO:0003735">
    <property type="term" value="F:structural constituent of ribosome"/>
    <property type="evidence" value="ECO:0007669"/>
    <property type="project" value="InterPro"/>
</dbReference>
<dbReference type="GO" id="GO:0006412">
    <property type="term" value="P:translation"/>
    <property type="evidence" value="ECO:0007669"/>
    <property type="project" value="UniProtKB-UniRule"/>
</dbReference>
<dbReference type="CDD" id="cd01425">
    <property type="entry name" value="RPS2"/>
    <property type="match status" value="1"/>
</dbReference>
<dbReference type="Gene3D" id="3.40.50.10490">
    <property type="entry name" value="Glucose-6-phosphate isomerase like protein, domain 1"/>
    <property type="match status" value="1"/>
</dbReference>
<dbReference type="Gene3D" id="1.10.287.610">
    <property type="entry name" value="Helix hairpin bin"/>
    <property type="match status" value="1"/>
</dbReference>
<dbReference type="HAMAP" id="MF_00291_B">
    <property type="entry name" value="Ribosomal_uS2_B"/>
    <property type="match status" value="1"/>
</dbReference>
<dbReference type="InterPro" id="IPR001865">
    <property type="entry name" value="Ribosomal_uS2"/>
</dbReference>
<dbReference type="InterPro" id="IPR005706">
    <property type="entry name" value="Ribosomal_uS2_bac/mit/plastid"/>
</dbReference>
<dbReference type="InterPro" id="IPR018130">
    <property type="entry name" value="Ribosomal_uS2_CS"/>
</dbReference>
<dbReference type="InterPro" id="IPR023591">
    <property type="entry name" value="Ribosomal_uS2_flav_dom_sf"/>
</dbReference>
<dbReference type="NCBIfam" id="TIGR01011">
    <property type="entry name" value="rpsB_bact"/>
    <property type="match status" value="1"/>
</dbReference>
<dbReference type="PANTHER" id="PTHR12534">
    <property type="entry name" value="30S RIBOSOMAL PROTEIN S2 PROKARYOTIC AND ORGANELLAR"/>
    <property type="match status" value="1"/>
</dbReference>
<dbReference type="PANTHER" id="PTHR12534:SF0">
    <property type="entry name" value="SMALL RIBOSOMAL SUBUNIT PROTEIN US2M"/>
    <property type="match status" value="1"/>
</dbReference>
<dbReference type="Pfam" id="PF00318">
    <property type="entry name" value="Ribosomal_S2"/>
    <property type="match status" value="1"/>
</dbReference>
<dbReference type="PRINTS" id="PR00395">
    <property type="entry name" value="RIBOSOMALS2"/>
</dbReference>
<dbReference type="SUPFAM" id="SSF52313">
    <property type="entry name" value="Ribosomal protein S2"/>
    <property type="match status" value="1"/>
</dbReference>
<dbReference type="PROSITE" id="PS00962">
    <property type="entry name" value="RIBOSOMAL_S2_1"/>
    <property type="match status" value="1"/>
</dbReference>
<name>RS2_CLASE</name>
<evidence type="ECO:0000255" key="1">
    <source>
        <dbReference type="HAMAP-Rule" id="MF_00291"/>
    </source>
</evidence>
<evidence type="ECO:0000256" key="2">
    <source>
        <dbReference type="SAM" id="MobiDB-lite"/>
    </source>
</evidence>
<evidence type="ECO:0000305" key="3"/>
<reference key="1">
    <citation type="journal article" date="2008" name="J. Bacteriol.">
        <title>Genome of the actinomycete plant pathogen Clavibacter michiganensis subsp. sepedonicus suggests recent niche adaptation.</title>
        <authorList>
            <person name="Bentley S.D."/>
            <person name="Corton C."/>
            <person name="Brown S.E."/>
            <person name="Barron A."/>
            <person name="Clark L."/>
            <person name="Doggett J."/>
            <person name="Harris B."/>
            <person name="Ormond D."/>
            <person name="Quail M.A."/>
            <person name="May G."/>
            <person name="Francis D."/>
            <person name="Knudson D."/>
            <person name="Parkhill J."/>
            <person name="Ishimaru C.A."/>
        </authorList>
    </citation>
    <scope>NUCLEOTIDE SEQUENCE [LARGE SCALE GENOMIC DNA]</scope>
    <source>
        <strain>ATCC 33113 / DSM 20744 / JCM 9667 / LMG 2889 / ICMP 2535 / C-1</strain>
    </source>
</reference>
<feature type="chain" id="PRO_1000078872" description="Small ribosomal subunit protein uS2">
    <location>
        <begin position="1"/>
        <end position="320"/>
    </location>
</feature>
<feature type="region of interest" description="Disordered" evidence="2">
    <location>
        <begin position="254"/>
        <end position="320"/>
    </location>
</feature>
<feature type="compositionally biased region" description="Basic and acidic residues" evidence="2">
    <location>
        <begin position="272"/>
        <end position="282"/>
    </location>
</feature>
<feature type="compositionally biased region" description="Low complexity" evidence="2">
    <location>
        <begin position="308"/>
        <end position="320"/>
    </location>
</feature>
<protein>
    <recommendedName>
        <fullName evidence="1">Small ribosomal subunit protein uS2</fullName>
    </recommendedName>
    <alternativeName>
        <fullName evidence="3">30S ribosomal protein S2</fullName>
    </alternativeName>
</protein>
<comment type="similarity">
    <text evidence="1">Belongs to the universal ribosomal protein uS2 family.</text>
</comment>
<proteinExistence type="inferred from homology"/>
<accession>B0REP4</accession>
<gene>
    <name evidence="1" type="primary">rpsB</name>
    <name type="ordered locus">CMS0771</name>
</gene>
<organism>
    <name type="scientific">Clavibacter sepedonicus</name>
    <name type="common">Clavibacter michiganensis subsp. sepedonicus</name>
    <dbReference type="NCBI Taxonomy" id="31964"/>
    <lineage>
        <taxon>Bacteria</taxon>
        <taxon>Bacillati</taxon>
        <taxon>Actinomycetota</taxon>
        <taxon>Actinomycetes</taxon>
        <taxon>Micrococcales</taxon>
        <taxon>Microbacteriaceae</taxon>
        <taxon>Clavibacter</taxon>
    </lineage>
</organism>
<keyword id="KW-0687">Ribonucleoprotein</keyword>
<keyword id="KW-0689">Ribosomal protein</keyword>
<sequence>MAVVTIRQLLDCGVHFGHPKTRWNPKMKRFIFTERSGIYIIDLQQSLALIDKAYDFVKETVAHGGTILFVGTKKQAQESIAEQAQRVGQPYVNQRWLGGLLTNFQTVHKRLNRLKELDLVDFDDTTRGFTKKELLIQRRERDKLEKSLGGIRNLTKTPSAMWVVDTKKEHLAIDEARKLGIPVIGILDTNCDPDEVQYPIPGNDDAIRSVALLTRIIADAAAEGLIQRHQKPDAEGSAPAEPLADWERELLEQGDAAKAALPVEENDVDAEVSAKNEAKSDDEVPAPVHAPESDDATEAKIEAEATEAEAAPATTGPVSE</sequence>